<sequence>MIKMLQLPFNKKGQVSFDFIIAMLFLLLIFAFMGQNVLNMAKSFRDSETAEHAHAILDSFENYAIMAYSKDVTVNATFEPIGNLNYTIMLSNKSISVNSSTNIIFQPETDANGDYVSIKCNNVDNSVNTIPLNAVRISFGDFTVSKDEMEVNIR</sequence>
<proteinExistence type="evidence at protein level"/>
<name>EPDC_METMP</name>
<evidence type="ECO:0000269" key="1">
    <source>
    </source>
</evidence>
<evidence type="ECO:0000269" key="2">
    <source>
    </source>
</evidence>
<evidence type="ECO:0000303" key="3">
    <source>
    </source>
</evidence>
<evidence type="ECO:0000305" key="4"/>
<evidence type="ECO:0000305" key="5">
    <source>
    </source>
</evidence>
<evidence type="ECO:0000305" key="6">
    <source>
    </source>
</evidence>
<evidence type="ECO:0000312" key="7">
    <source>
        <dbReference type="EMBL" id="CAF29793.1"/>
    </source>
</evidence>
<feature type="propeptide" id="PRO_0000462050" evidence="5">
    <location>
        <begin position="1"/>
        <end position="13"/>
    </location>
</feature>
<feature type="chain" id="PRO_0000462051" description="Minor structural pilin EpdC">
    <location>
        <begin position="14"/>
        <end position="154"/>
    </location>
</feature>
<feature type="short sequence motif" description="QXSXEXXXL" evidence="5">
    <location>
        <begin position="14"/>
        <end position="24"/>
    </location>
</feature>
<gene>
    <name evidence="3" type="primary">epdC</name>
    <name evidence="7" type="ordered locus">MMP0237</name>
</gene>
<reference key="1">
    <citation type="journal article" date="2004" name="J. Bacteriol.">
        <title>Complete genome sequence of the genetically tractable hydrogenotrophic methanogen Methanococcus maripaludis.</title>
        <authorList>
            <person name="Hendrickson E.L."/>
            <person name="Kaul R."/>
            <person name="Zhou Y."/>
            <person name="Bovee D."/>
            <person name="Chapman P."/>
            <person name="Chung J."/>
            <person name="Conway de Macario E."/>
            <person name="Dodsworth J.A."/>
            <person name="Gillett W."/>
            <person name="Graham D.E."/>
            <person name="Hackett M."/>
            <person name="Haydock A.K."/>
            <person name="Kang A."/>
            <person name="Land M.L."/>
            <person name="Levy R."/>
            <person name="Lie T.J."/>
            <person name="Major T.A."/>
            <person name="Moore B.C."/>
            <person name="Porat I."/>
            <person name="Palmeiri A."/>
            <person name="Rouse G."/>
            <person name="Saenphimmachak C."/>
            <person name="Soell D."/>
            <person name="Van Dien S."/>
            <person name="Wang T."/>
            <person name="Whitman W.B."/>
            <person name="Xia Q."/>
            <person name="Zhang Y."/>
            <person name="Larimer F.W."/>
            <person name="Olson M.V."/>
            <person name="Leigh J.A."/>
        </authorList>
    </citation>
    <scope>NUCLEOTIDE SEQUENCE [LARGE SCALE GENOMIC DNA]</scope>
    <source>
        <strain>DSM 14266 / JCM 13030 / NBRC 101832 / S2 / LL</strain>
    </source>
</reference>
<reference key="2">
    <citation type="journal article" date="2007" name="J. Bacteriol.">
        <title>Identification of diverse archaeal proteins with class III signal peptides cleaved by distinct archaeal prepilin peptidases.</title>
        <authorList>
            <person name="Szabo Z."/>
            <person name="Stahl A.O."/>
            <person name="Albers S.V."/>
            <person name="Kissinger J.C."/>
            <person name="Driessen A.J."/>
            <person name="Pohlschroeder M."/>
        </authorList>
    </citation>
    <scope>CLEAVAGE BY EPPA</scope>
    <scope>DOMAIN</scope>
    <source>
        <strain>DSM 14266 / JCM 13030 / NBRC 101832 / S2 / LL</strain>
    </source>
</reference>
<reference key="3">
    <citation type="journal article" date="2011" name="J. Bacteriol.">
        <title>Genetic and mass spectrometry analyses of the unusual type IV-like pili of the archaeon Methanococcus maripaludis.</title>
        <authorList>
            <person name="Ng S.Y."/>
            <person name="Wu J."/>
            <person name="Nair D.B."/>
            <person name="Logan S.M."/>
            <person name="Robotham A."/>
            <person name="Tessier L."/>
            <person name="Kelly J.F."/>
            <person name="Uchida K."/>
            <person name="Aizawa S."/>
            <person name="Jarrell K.F."/>
        </authorList>
    </citation>
    <scope>FUNCTION</scope>
    <scope>DISRUPTION PHENOTYPE</scope>
    <source>
        <strain>DSM 14266 / JCM 13030 / NBRC 101832 / S2 / LL</strain>
    </source>
</reference>
<comment type="function">
    <text evidence="2">Minor component of the type IV-like pili (PubMed:21075925). Essential for pili formation (PubMed:21075925).</text>
</comment>
<comment type="subcellular location">
    <subcellularLocation>
        <location evidence="5">Secreted</location>
    </subcellularLocation>
    <subcellularLocation>
        <location evidence="5">Cell surface</location>
    </subcellularLocation>
    <subcellularLocation>
        <location evidence="5 6">Fimbrium</location>
    </subcellularLocation>
</comment>
<comment type="domain">
    <text evidence="1">Contains an amino terminal motif QXSXEXXXL, which is part of a class III signal sequence.</text>
</comment>
<comment type="PTM">
    <text evidence="1">The N-terminus is cleaved by the prepilin peptidase EppA, which recognizes the class III signal sequence.</text>
</comment>
<comment type="disruption phenotype">
    <text evidence="2">Deletion of the gene leads to completely nonpiliated cells.</text>
</comment>
<organism>
    <name type="scientific">Methanococcus maripaludis (strain DSM 14266 / JCM 13030 / NBRC 101832 / S2 / LL)</name>
    <dbReference type="NCBI Taxonomy" id="267377"/>
    <lineage>
        <taxon>Archaea</taxon>
        <taxon>Methanobacteriati</taxon>
        <taxon>Methanobacteriota</taxon>
        <taxon>Methanomada group</taxon>
        <taxon>Methanococci</taxon>
        <taxon>Methanococcales</taxon>
        <taxon>Methanococcaceae</taxon>
        <taxon>Methanococcus</taxon>
    </lineage>
</organism>
<dbReference type="EMBL" id="BX950229">
    <property type="protein sequence ID" value="CAF29793.1"/>
    <property type="molecule type" value="Genomic_DNA"/>
</dbReference>
<dbReference type="STRING" id="267377.MMP0237"/>
<dbReference type="EnsemblBacteria" id="CAF29793">
    <property type="protein sequence ID" value="CAF29793"/>
    <property type="gene ID" value="MMP0237"/>
</dbReference>
<dbReference type="KEGG" id="mmp:MMP0237"/>
<dbReference type="PATRIC" id="fig|267377.15.peg.239"/>
<dbReference type="eggNOG" id="arCOG06584">
    <property type="taxonomic scope" value="Archaea"/>
</dbReference>
<dbReference type="HOGENOM" id="CLU_125809_0_0_2"/>
<dbReference type="Proteomes" id="UP000000590">
    <property type="component" value="Chromosome"/>
</dbReference>
<dbReference type="GO" id="GO:0009986">
    <property type="term" value="C:cell surface"/>
    <property type="evidence" value="ECO:0007669"/>
    <property type="project" value="UniProtKB-SubCell"/>
</dbReference>
<dbReference type="GO" id="GO:0005576">
    <property type="term" value="C:extracellular region"/>
    <property type="evidence" value="ECO:0007669"/>
    <property type="project" value="UniProtKB-SubCell"/>
</dbReference>
<dbReference type="GO" id="GO:0016020">
    <property type="term" value="C:membrane"/>
    <property type="evidence" value="ECO:0007669"/>
    <property type="project" value="UniProtKB-KW"/>
</dbReference>
<protein>
    <recommendedName>
        <fullName evidence="4">Minor structural pilin EpdC</fullName>
    </recommendedName>
    <alternativeName>
        <fullName evidence="3">EppA-dependent protein C</fullName>
    </alternativeName>
</protein>
<keyword id="KW-0281">Fimbrium</keyword>
<keyword id="KW-1185">Reference proteome</keyword>
<keyword id="KW-0964">Secreted</keyword>
<accession>Q6M0N3</accession>